<proteinExistence type="inferred from homology"/>
<keyword id="KW-0963">Cytoplasm</keyword>
<keyword id="KW-0489">Methyltransferase</keyword>
<keyword id="KW-1185">Reference proteome</keyword>
<keyword id="KW-0949">S-adenosyl-L-methionine</keyword>
<keyword id="KW-0808">Transferase</keyword>
<protein>
    <recommendedName>
        <fullName>Protein arginine N-methyltransferase 5</fullName>
        <ecNumber>2.1.1.320</ecNumber>
    </recommendedName>
    <alternativeName>
        <fullName>Shk1 kinase-binding protein 1 homolog</fullName>
    </alternativeName>
</protein>
<reference key="1">
    <citation type="journal article" date="2005" name="PLoS Biol.">
        <title>The genomes of Oryza sativa: a history of duplications.</title>
        <authorList>
            <person name="Yu J."/>
            <person name="Wang J."/>
            <person name="Lin W."/>
            <person name="Li S."/>
            <person name="Li H."/>
            <person name="Zhou J."/>
            <person name="Ni P."/>
            <person name="Dong W."/>
            <person name="Hu S."/>
            <person name="Zeng C."/>
            <person name="Zhang J."/>
            <person name="Zhang Y."/>
            <person name="Li R."/>
            <person name="Xu Z."/>
            <person name="Li S."/>
            <person name="Li X."/>
            <person name="Zheng H."/>
            <person name="Cong L."/>
            <person name="Lin L."/>
            <person name="Yin J."/>
            <person name="Geng J."/>
            <person name="Li G."/>
            <person name="Shi J."/>
            <person name="Liu J."/>
            <person name="Lv H."/>
            <person name="Li J."/>
            <person name="Wang J."/>
            <person name="Deng Y."/>
            <person name="Ran L."/>
            <person name="Shi X."/>
            <person name="Wang X."/>
            <person name="Wu Q."/>
            <person name="Li C."/>
            <person name="Ren X."/>
            <person name="Wang J."/>
            <person name="Wang X."/>
            <person name="Li D."/>
            <person name="Liu D."/>
            <person name="Zhang X."/>
            <person name="Ji Z."/>
            <person name="Zhao W."/>
            <person name="Sun Y."/>
            <person name="Zhang Z."/>
            <person name="Bao J."/>
            <person name="Han Y."/>
            <person name="Dong L."/>
            <person name="Ji J."/>
            <person name="Chen P."/>
            <person name="Wu S."/>
            <person name="Liu J."/>
            <person name="Xiao Y."/>
            <person name="Bu D."/>
            <person name="Tan J."/>
            <person name="Yang L."/>
            <person name="Ye C."/>
            <person name="Zhang J."/>
            <person name="Xu J."/>
            <person name="Zhou Y."/>
            <person name="Yu Y."/>
            <person name="Zhang B."/>
            <person name="Zhuang S."/>
            <person name="Wei H."/>
            <person name="Liu B."/>
            <person name="Lei M."/>
            <person name="Yu H."/>
            <person name="Li Y."/>
            <person name="Xu H."/>
            <person name="Wei S."/>
            <person name="He X."/>
            <person name="Fang L."/>
            <person name="Zhang Z."/>
            <person name="Zhang Y."/>
            <person name="Huang X."/>
            <person name="Su Z."/>
            <person name="Tong W."/>
            <person name="Li J."/>
            <person name="Tong Z."/>
            <person name="Li S."/>
            <person name="Ye J."/>
            <person name="Wang L."/>
            <person name="Fang L."/>
            <person name="Lei T."/>
            <person name="Chen C.-S."/>
            <person name="Chen H.-C."/>
            <person name="Xu Z."/>
            <person name="Li H."/>
            <person name="Huang H."/>
            <person name="Zhang F."/>
            <person name="Xu H."/>
            <person name="Li N."/>
            <person name="Zhao C."/>
            <person name="Li S."/>
            <person name="Dong L."/>
            <person name="Huang Y."/>
            <person name="Li L."/>
            <person name="Xi Y."/>
            <person name="Qi Q."/>
            <person name="Li W."/>
            <person name="Zhang B."/>
            <person name="Hu W."/>
            <person name="Zhang Y."/>
            <person name="Tian X."/>
            <person name="Jiao Y."/>
            <person name="Liang X."/>
            <person name="Jin J."/>
            <person name="Gao L."/>
            <person name="Zheng W."/>
            <person name="Hao B."/>
            <person name="Liu S.-M."/>
            <person name="Wang W."/>
            <person name="Yuan L."/>
            <person name="Cao M."/>
            <person name="McDermott J."/>
            <person name="Samudrala R."/>
            <person name="Wang J."/>
            <person name="Wong G.K.-S."/>
            <person name="Yang H."/>
        </authorList>
    </citation>
    <scope>NUCLEOTIDE SEQUENCE [LARGE SCALE GENOMIC DNA]</scope>
    <source>
        <strain>cv. 93-11</strain>
    </source>
</reference>
<comment type="function">
    <text evidence="1">Methylates arginine residues in proteins such as histone H4.</text>
</comment>
<comment type="catalytic activity">
    <reaction>
        <text>L-arginyl-[protein] + 2 S-adenosyl-L-methionine = N(omega),N(omega)'-dimethyl-L-arginyl-[protein] + 2 S-adenosyl-L-homocysteine + 2 H(+)</text>
        <dbReference type="Rhea" id="RHEA:48108"/>
        <dbReference type="Rhea" id="RHEA-COMP:10532"/>
        <dbReference type="Rhea" id="RHEA-COMP:11992"/>
        <dbReference type="ChEBI" id="CHEBI:15378"/>
        <dbReference type="ChEBI" id="CHEBI:29965"/>
        <dbReference type="ChEBI" id="CHEBI:57856"/>
        <dbReference type="ChEBI" id="CHEBI:59789"/>
        <dbReference type="ChEBI" id="CHEBI:88221"/>
        <dbReference type="EC" id="2.1.1.320"/>
    </reaction>
</comment>
<comment type="subcellular location">
    <subcellularLocation>
        <location evidence="1">Cytoplasm</location>
    </subcellularLocation>
</comment>
<comment type="similarity">
    <text evidence="3">Belongs to the class I-like SAM-binding methyltransferase superfamily. Protein arginine N-methyltransferase family.</text>
</comment>
<gene>
    <name type="primary">PRMT5</name>
    <name type="synonym">SKB1</name>
    <name type="ORF">OsI_005646</name>
</gene>
<dbReference type="EC" id="2.1.1.320"/>
<dbReference type="EMBL" id="CM000127">
    <property type="status" value="NOT_ANNOTATED_CDS"/>
    <property type="molecule type" value="Genomic_DNA"/>
</dbReference>
<dbReference type="SMR" id="A2X0Q3"/>
<dbReference type="STRING" id="39946.A2X0Q3"/>
<dbReference type="EnsemblPlants" id="OsIR64_02g0003000.01">
    <property type="protein sequence ID" value="OsIR64_02g0003000.01"/>
    <property type="gene ID" value="OsIR64_02g0003000"/>
</dbReference>
<dbReference type="EnsemblPlants" id="OsLiXu_02g0003160.01">
    <property type="protein sequence ID" value="OsLiXu_02g0003160.01"/>
    <property type="gene ID" value="OsLiXu_02g0003160"/>
</dbReference>
<dbReference type="EnsemblPlants" id="OsPr106_02g0003090.01">
    <property type="protein sequence ID" value="OsPr106_02g0003090.01"/>
    <property type="gene ID" value="OsPr106_02g0003090"/>
</dbReference>
<dbReference type="EnsemblPlants" id="OsZS97_02G003010_02">
    <property type="protein sequence ID" value="OsZS97_02G003010_02"/>
    <property type="gene ID" value="OsZS97_02G003010"/>
</dbReference>
<dbReference type="Gramene" id="OsIR64_02g0003000.01">
    <property type="protein sequence ID" value="OsIR64_02g0003000.01"/>
    <property type="gene ID" value="OsIR64_02g0003000"/>
</dbReference>
<dbReference type="Gramene" id="OsLiXu_02g0003160.01">
    <property type="protein sequence ID" value="OsLiXu_02g0003160.01"/>
    <property type="gene ID" value="OsLiXu_02g0003160"/>
</dbReference>
<dbReference type="Gramene" id="OsPr106_02g0003090.01">
    <property type="protein sequence ID" value="OsPr106_02g0003090.01"/>
    <property type="gene ID" value="OsPr106_02g0003090"/>
</dbReference>
<dbReference type="Gramene" id="OsZS97_02G003010_02">
    <property type="protein sequence ID" value="OsZS97_02G003010_02"/>
    <property type="gene ID" value="OsZS97_02G003010"/>
</dbReference>
<dbReference type="Proteomes" id="UP000007015">
    <property type="component" value="Chromosome 2"/>
</dbReference>
<dbReference type="GO" id="GO:0005829">
    <property type="term" value="C:cytosol"/>
    <property type="evidence" value="ECO:0007669"/>
    <property type="project" value="TreeGrafter"/>
</dbReference>
<dbReference type="GO" id="GO:0005634">
    <property type="term" value="C:nucleus"/>
    <property type="evidence" value="ECO:0007669"/>
    <property type="project" value="TreeGrafter"/>
</dbReference>
<dbReference type="GO" id="GO:0008469">
    <property type="term" value="F:histone arginine N-methyltransferase activity"/>
    <property type="evidence" value="ECO:0007669"/>
    <property type="project" value="TreeGrafter"/>
</dbReference>
<dbReference type="GO" id="GO:0035243">
    <property type="term" value="F:protein-arginine omega-N symmetric methyltransferase activity"/>
    <property type="evidence" value="ECO:0007669"/>
    <property type="project" value="UniProtKB-EC"/>
</dbReference>
<dbReference type="GO" id="GO:0032259">
    <property type="term" value="P:methylation"/>
    <property type="evidence" value="ECO:0007669"/>
    <property type="project" value="UniProtKB-KW"/>
</dbReference>
<dbReference type="GO" id="GO:0006355">
    <property type="term" value="P:regulation of DNA-templated transcription"/>
    <property type="evidence" value="ECO:0007669"/>
    <property type="project" value="TreeGrafter"/>
</dbReference>
<dbReference type="FunFam" id="3.20.20.150:FF:000016">
    <property type="entry name" value="Protein arginine N-methyltransferase"/>
    <property type="match status" value="1"/>
</dbReference>
<dbReference type="FunFam" id="2.70.160.11:FF:000003">
    <property type="entry name" value="Protein arginine N-methyltransferase 5"/>
    <property type="match status" value="1"/>
</dbReference>
<dbReference type="FunFam" id="3.40.50.150:FF:000029">
    <property type="entry name" value="Protein arginine N-methyltransferase 5"/>
    <property type="match status" value="1"/>
</dbReference>
<dbReference type="Gene3D" id="3.20.20.150">
    <property type="entry name" value="Divalent-metal-dependent TIM barrel enzymes"/>
    <property type="match status" value="1"/>
</dbReference>
<dbReference type="Gene3D" id="2.70.160.11">
    <property type="entry name" value="Hnrnp arginine n-methyltransferase1"/>
    <property type="match status" value="1"/>
</dbReference>
<dbReference type="Gene3D" id="3.40.50.150">
    <property type="entry name" value="Vaccinia Virus protein VP39"/>
    <property type="match status" value="1"/>
</dbReference>
<dbReference type="InterPro" id="IPR025799">
    <property type="entry name" value="Arg_MeTrfase"/>
</dbReference>
<dbReference type="InterPro" id="IPR007857">
    <property type="entry name" value="Arg_MeTrfase_PRMT5"/>
</dbReference>
<dbReference type="InterPro" id="IPR035075">
    <property type="entry name" value="PRMT5"/>
</dbReference>
<dbReference type="InterPro" id="IPR035248">
    <property type="entry name" value="PRMT5_C"/>
</dbReference>
<dbReference type="InterPro" id="IPR035247">
    <property type="entry name" value="PRMT5_TIM"/>
</dbReference>
<dbReference type="InterPro" id="IPR029063">
    <property type="entry name" value="SAM-dependent_MTases_sf"/>
</dbReference>
<dbReference type="PANTHER" id="PTHR10738">
    <property type="entry name" value="PROTEIN ARGININE N-METHYLTRANSFERASE 5"/>
    <property type="match status" value="1"/>
</dbReference>
<dbReference type="PANTHER" id="PTHR10738:SF0">
    <property type="entry name" value="PROTEIN ARGININE N-METHYLTRANSFERASE 5"/>
    <property type="match status" value="1"/>
</dbReference>
<dbReference type="Pfam" id="PF05185">
    <property type="entry name" value="PRMT5"/>
    <property type="match status" value="1"/>
</dbReference>
<dbReference type="Pfam" id="PF17286">
    <property type="entry name" value="PRMT5_C"/>
    <property type="match status" value="1"/>
</dbReference>
<dbReference type="Pfam" id="PF17285">
    <property type="entry name" value="PRMT5_TIM"/>
    <property type="match status" value="1"/>
</dbReference>
<dbReference type="PIRSF" id="PIRSF015894">
    <property type="entry name" value="Skb1_MeTrfase"/>
    <property type="match status" value="1"/>
</dbReference>
<dbReference type="SUPFAM" id="SSF53335">
    <property type="entry name" value="S-adenosyl-L-methionine-dependent methyltransferases"/>
    <property type="match status" value="1"/>
</dbReference>
<dbReference type="PROSITE" id="PS51678">
    <property type="entry name" value="SAM_MT_PRMT"/>
    <property type="match status" value="1"/>
</dbReference>
<sequence>MPLGQRAGDKSESRYCGVEVLDFPAGEELPAVLSHSLSSSFDFLLAPLVDPDYRPTPGSVLPVAASDLVLGPAQWSSHIVGKINEWIDLDAEDEQLRLDSEITLKQEIAWASHLSLQACVLPPPKRSSCANYARVVNHILQGLTNLQLWLRIPLEKSEPMDEDHDGAKDNSDMSDTVDSWEWWNSFRLLCEHSSQLCVALDVLSTLPSMNSLGRWFGEPVRAAILQTNAFLTNARGYPCLSKRHQKLLTGFFNHSVQVIISGRSNHNVSQGGVLSGDENHTEDTAVRHALSPYLDYIAYIYQRMDPLPEQERFEINYRDFLQSPLQPLMDNLEAQTYETFEKDTVKYTQYQRAIAKALVDRVSDDDVSTTKTVLMVVGAGRGPLVRASLQAAEETGRKLKVYAVEKNPNAVITLHSLIKLEGWESLVTIISSDMRCWEAPEKADILVSELLGSFGDNELSPECLDGAQRFLKPDGISIPSSYTSFIEPITASKLHNDIKAHKDIAHFETAYVVKLHRIARLAPTQSVFTFDHPNPSPNASNQRYTKLKFEIPQETGSCLVHGFAGYFDAVLYKDVHLGIEPNTATPNMFSWFPIFFPLRKPIYVPSKTPIEVHFWRCCGATKVWYEWAVTAPSPSPIHNSNGRSYWVGL</sequence>
<feature type="chain" id="PRO_0000293994" description="Protein arginine N-methyltransferase 5">
    <location>
        <begin position="1"/>
        <end position="649"/>
    </location>
</feature>
<feature type="domain" description="SAM-dependent MTase PRMT-type" evidence="3">
    <location>
        <begin position="321"/>
        <end position="627"/>
    </location>
</feature>
<feature type="region of interest" description="TIM barrel" evidence="1">
    <location>
        <begin position="10"/>
        <end position="300"/>
    </location>
</feature>
<feature type="region of interest" description="Beta barrel" evidence="1">
    <location>
        <begin position="479"/>
        <end position="649"/>
    </location>
</feature>
<feature type="region of interest" description="Dimerization" evidence="1">
    <location>
        <begin position="491"/>
        <end position="507"/>
    </location>
</feature>
<feature type="active site" description="Proton donor/acceptor" evidence="1">
    <location>
        <position position="449"/>
    </location>
</feature>
<feature type="active site" description="Proton donor/acceptor" evidence="1">
    <location>
        <position position="458"/>
    </location>
</feature>
<feature type="binding site" evidence="1">
    <location>
        <position position="337"/>
    </location>
    <ligand>
        <name>S-adenosyl-L-methionine</name>
        <dbReference type="ChEBI" id="CHEBI:59789"/>
    </ligand>
</feature>
<feature type="binding site" evidence="2">
    <location>
        <position position="340"/>
    </location>
    <ligand>
        <name>a protein</name>
        <dbReference type="ChEBI" id="CHEBI:16541"/>
        <note>substrate</note>
    </ligand>
    <ligandPart>
        <name>L-arginine residue</name>
        <dbReference type="ChEBI" id="CHEBI:29965"/>
    </ligandPart>
</feature>
<feature type="binding site" evidence="1">
    <location>
        <begin position="346"/>
        <end position="347"/>
    </location>
    <ligand>
        <name>S-adenosyl-L-methionine</name>
        <dbReference type="ChEBI" id="CHEBI:59789"/>
    </ligand>
</feature>
<feature type="binding site" evidence="1">
    <location>
        <position position="405"/>
    </location>
    <ligand>
        <name>S-adenosyl-L-methionine</name>
        <dbReference type="ChEBI" id="CHEBI:59789"/>
    </ligand>
</feature>
<feature type="binding site" evidence="1">
    <location>
        <begin position="433"/>
        <end position="434"/>
    </location>
    <ligand>
        <name>S-adenosyl-L-methionine</name>
        <dbReference type="ChEBI" id="CHEBI:59789"/>
    </ligand>
</feature>
<feature type="binding site" evidence="2">
    <location>
        <position position="449"/>
    </location>
    <ligand>
        <name>a protein</name>
        <dbReference type="ChEBI" id="CHEBI:16541"/>
        <note>substrate</note>
    </ligand>
    <ligandPart>
        <name>L-arginine residue</name>
        <dbReference type="ChEBI" id="CHEBI:29965"/>
    </ligandPart>
</feature>
<feature type="binding site" evidence="2">
    <location>
        <position position="458"/>
    </location>
    <ligand>
        <name>a protein</name>
        <dbReference type="ChEBI" id="CHEBI:16541"/>
        <note>substrate</note>
    </ligand>
    <ligandPart>
        <name>L-arginine residue</name>
        <dbReference type="ChEBI" id="CHEBI:29965"/>
    </ligandPart>
</feature>
<feature type="site" description="Critical for specifying symmetric addition of methyl groups" evidence="1">
    <location>
        <position position="340"/>
    </location>
</feature>
<name>ANM5_ORYSI</name>
<accession>A2X0Q3</accession>
<organism>
    <name type="scientific">Oryza sativa subsp. indica</name>
    <name type="common">Rice</name>
    <dbReference type="NCBI Taxonomy" id="39946"/>
    <lineage>
        <taxon>Eukaryota</taxon>
        <taxon>Viridiplantae</taxon>
        <taxon>Streptophyta</taxon>
        <taxon>Embryophyta</taxon>
        <taxon>Tracheophyta</taxon>
        <taxon>Spermatophyta</taxon>
        <taxon>Magnoliopsida</taxon>
        <taxon>Liliopsida</taxon>
        <taxon>Poales</taxon>
        <taxon>Poaceae</taxon>
        <taxon>BOP clade</taxon>
        <taxon>Oryzoideae</taxon>
        <taxon>Oryzeae</taxon>
        <taxon>Oryzinae</taxon>
        <taxon>Oryza</taxon>
        <taxon>Oryza sativa</taxon>
    </lineage>
</organism>
<evidence type="ECO:0000250" key="1"/>
<evidence type="ECO:0000250" key="2">
    <source>
        <dbReference type="UniProtKB" id="O14744"/>
    </source>
</evidence>
<evidence type="ECO:0000255" key="3">
    <source>
        <dbReference type="PROSITE-ProRule" id="PRU01015"/>
    </source>
</evidence>